<sequence length="100" mass="11296">MASSSMSSQSSGSWTAKQNKAFEQALATYDQDTPNRWQNVAKVVGGKTTEEVKRHYELLVQDINSIENGHVPFPNYRTSGGCTNGRLSQEEKRMRNMRLQ</sequence>
<comment type="function">
    <text evidence="1">Probable transcription factor.</text>
</comment>
<comment type="subcellular location">
    <subcellularLocation>
        <location evidence="2">Nucleus</location>
    </subcellularLocation>
</comment>
<comment type="alternative products">
    <event type="alternative splicing"/>
    <isoform>
        <id>F4JVB8-1</id>
        <name>1</name>
        <sequence type="displayed"/>
    </isoform>
    <isoform>
        <id>F4JVB8-2</id>
        <name>2</name>
        <sequence type="described" ref="VSP_044169"/>
    </isoform>
</comment>
<comment type="miscellaneous">
    <text evidence="7">Assigned as a member of the MYB-related gene family, I-box-binding-like subfamily.</text>
</comment>
<comment type="miscellaneous">
    <molecule>Isoform 2</molecule>
    <text evidence="6">May be due to an intron retention.</text>
</comment>
<keyword id="KW-0025">Alternative splicing</keyword>
<keyword id="KW-0539">Nucleus</keyword>
<keyword id="KW-1185">Reference proteome</keyword>
<keyword id="KW-0804">Transcription</keyword>
<keyword id="KW-0805">Transcription regulation</keyword>
<name>RADL1_ARATH</name>
<gene>
    <name type="primary">RL1</name>
    <name type="synonym">RSM2</name>
    <name type="ordered locus">At4g39250</name>
    <name type="ORF">T22F8.150</name>
</gene>
<accession>F4JVB8</accession>
<accession>Q0NZY1</accession>
<accession>Q9T032</accession>
<feature type="chain" id="PRO_0000419441" description="Protein RADIALIS-like 1">
    <location>
        <begin position="1"/>
        <end position="100"/>
    </location>
</feature>
<feature type="domain" description="SANT" evidence="2">
    <location>
        <begin position="9"/>
        <end position="64"/>
    </location>
</feature>
<feature type="region of interest" description="Disordered" evidence="3">
    <location>
        <begin position="73"/>
        <end position="100"/>
    </location>
</feature>
<feature type="compositionally biased region" description="Polar residues" evidence="3">
    <location>
        <begin position="76"/>
        <end position="87"/>
    </location>
</feature>
<feature type="splice variant" id="VSP_044169" description="In isoform 2." evidence="4 5">
    <original>MRNMRLQ</original>
    <variation>YVLS</variation>
    <location>
        <begin position="94"/>
        <end position="100"/>
    </location>
</feature>
<evidence type="ECO:0000250" key="1"/>
<evidence type="ECO:0000255" key="2">
    <source>
        <dbReference type="PROSITE-ProRule" id="PRU00624"/>
    </source>
</evidence>
<evidence type="ECO:0000256" key="3">
    <source>
        <dbReference type="SAM" id="MobiDB-lite"/>
    </source>
</evidence>
<evidence type="ECO:0000303" key="4">
    <source ref="1"/>
</evidence>
<evidence type="ECO:0000303" key="5">
    <source ref="4"/>
</evidence>
<evidence type="ECO:0000305" key="6"/>
<evidence type="ECO:0000305" key="7">
    <source>
    </source>
</evidence>
<dbReference type="EMBL" id="AY519527">
    <property type="protein sequence ID" value="AAS09997.1"/>
    <property type="molecule type" value="mRNA"/>
</dbReference>
<dbReference type="EMBL" id="AL050351">
    <property type="protein sequence ID" value="CAB43640.1"/>
    <property type="molecule type" value="Genomic_DNA"/>
</dbReference>
<dbReference type="EMBL" id="AL161594">
    <property type="protein sequence ID" value="CAB80588.1"/>
    <property type="molecule type" value="Genomic_DNA"/>
</dbReference>
<dbReference type="EMBL" id="CP002687">
    <property type="protein sequence ID" value="AEE87043.1"/>
    <property type="molecule type" value="Genomic_DNA"/>
</dbReference>
<dbReference type="EMBL" id="BT024650">
    <property type="protein sequence ID" value="ABD57475.1"/>
    <property type="molecule type" value="mRNA"/>
</dbReference>
<dbReference type="EMBL" id="DQ375231">
    <property type="protein sequence ID" value="ABI14756.1"/>
    <property type="molecule type" value="mRNA"/>
</dbReference>
<dbReference type="PIR" id="T08573">
    <property type="entry name" value="T08573"/>
</dbReference>
<dbReference type="RefSeq" id="NP_195636.2">
    <molecule id="F4JVB8-1"/>
    <property type="nucleotide sequence ID" value="NM_120086.3"/>
</dbReference>
<dbReference type="SMR" id="F4JVB8"/>
<dbReference type="BioGRID" id="15361">
    <property type="interactions" value="6"/>
</dbReference>
<dbReference type="FunCoup" id="F4JVB8">
    <property type="interactions" value="151"/>
</dbReference>
<dbReference type="IntAct" id="F4JVB8">
    <property type="interactions" value="4"/>
</dbReference>
<dbReference type="STRING" id="3702.F4JVB8"/>
<dbReference type="PaxDb" id="3702-AT4G39250.1"/>
<dbReference type="EnsemblPlants" id="AT4G39250.1">
    <molecule id="F4JVB8-1"/>
    <property type="protein sequence ID" value="AT4G39250.1"/>
    <property type="gene ID" value="AT4G39250"/>
</dbReference>
<dbReference type="GeneID" id="830081"/>
<dbReference type="Gramene" id="AT4G39250.1">
    <molecule id="F4JVB8-1"/>
    <property type="protein sequence ID" value="AT4G39250.1"/>
    <property type="gene ID" value="AT4G39250"/>
</dbReference>
<dbReference type="KEGG" id="ath:AT4G39250"/>
<dbReference type="Araport" id="AT4G39250"/>
<dbReference type="TAIR" id="AT4G39250">
    <property type="gene designation" value="RL1"/>
</dbReference>
<dbReference type="eggNOG" id="KOG0724">
    <property type="taxonomic scope" value="Eukaryota"/>
</dbReference>
<dbReference type="HOGENOM" id="CLU_137624_1_2_1"/>
<dbReference type="InParanoid" id="F4JVB8"/>
<dbReference type="OMA" id="NRWQNVA"/>
<dbReference type="OrthoDB" id="118550at2759"/>
<dbReference type="PRO" id="PR:F4JVB8"/>
<dbReference type="Proteomes" id="UP000006548">
    <property type="component" value="Chromosome 4"/>
</dbReference>
<dbReference type="ExpressionAtlas" id="F4JVB8">
    <property type="expression patterns" value="baseline and differential"/>
</dbReference>
<dbReference type="GO" id="GO:0005634">
    <property type="term" value="C:nucleus"/>
    <property type="evidence" value="ECO:0007669"/>
    <property type="project" value="UniProtKB-SubCell"/>
</dbReference>
<dbReference type="GO" id="GO:0003700">
    <property type="term" value="F:DNA-binding transcription factor activity"/>
    <property type="evidence" value="ECO:0000250"/>
    <property type="project" value="TAIR"/>
</dbReference>
<dbReference type="CDD" id="cd00167">
    <property type="entry name" value="SANT"/>
    <property type="match status" value="1"/>
</dbReference>
<dbReference type="FunFam" id="1.10.10.60:FF:000154">
    <property type="entry name" value="Transcription factor SRM1"/>
    <property type="match status" value="1"/>
</dbReference>
<dbReference type="Gene3D" id="1.10.10.60">
    <property type="entry name" value="Homeodomain-like"/>
    <property type="match status" value="1"/>
</dbReference>
<dbReference type="InterPro" id="IPR009057">
    <property type="entry name" value="Homeodomain-like_sf"/>
</dbReference>
<dbReference type="InterPro" id="IPR044636">
    <property type="entry name" value="RADIALIS-like"/>
</dbReference>
<dbReference type="InterPro" id="IPR001005">
    <property type="entry name" value="SANT/Myb"/>
</dbReference>
<dbReference type="InterPro" id="IPR017884">
    <property type="entry name" value="SANT_dom"/>
</dbReference>
<dbReference type="PANTHER" id="PTHR43952">
    <property type="entry name" value="MYB FAMILY TRANSCRIPTION FACTOR-RELATED"/>
    <property type="match status" value="1"/>
</dbReference>
<dbReference type="PANTHER" id="PTHR43952:SF68">
    <property type="entry name" value="PROTEIN RADIALIS-LIKE 1"/>
    <property type="match status" value="1"/>
</dbReference>
<dbReference type="Pfam" id="PF00249">
    <property type="entry name" value="Myb_DNA-binding"/>
    <property type="match status" value="1"/>
</dbReference>
<dbReference type="SMART" id="SM00717">
    <property type="entry name" value="SANT"/>
    <property type="match status" value="1"/>
</dbReference>
<dbReference type="SUPFAM" id="SSF46689">
    <property type="entry name" value="Homeodomain-like"/>
    <property type="match status" value="1"/>
</dbReference>
<dbReference type="PROSITE" id="PS51293">
    <property type="entry name" value="SANT"/>
    <property type="match status" value="1"/>
</dbReference>
<organism>
    <name type="scientific">Arabidopsis thaliana</name>
    <name type="common">Mouse-ear cress</name>
    <dbReference type="NCBI Taxonomy" id="3702"/>
    <lineage>
        <taxon>Eukaryota</taxon>
        <taxon>Viridiplantae</taxon>
        <taxon>Streptophyta</taxon>
        <taxon>Embryophyta</taxon>
        <taxon>Tracheophyta</taxon>
        <taxon>Spermatophyta</taxon>
        <taxon>Magnoliopsida</taxon>
        <taxon>eudicotyledons</taxon>
        <taxon>Gunneridae</taxon>
        <taxon>Pentapetalae</taxon>
        <taxon>rosids</taxon>
        <taxon>malvids</taxon>
        <taxon>Brassicales</taxon>
        <taxon>Brassicaceae</taxon>
        <taxon>Camelineae</taxon>
        <taxon>Arabidopsis</taxon>
    </lineage>
</organism>
<proteinExistence type="evidence at transcript level"/>
<protein>
    <recommendedName>
        <fullName>Protein RADIALIS-like 1</fullName>
        <shortName>AtRL1</shortName>
        <shortName>Protein RAD-like 1</shortName>
    </recommendedName>
    <alternativeName>
        <fullName>Protein RADIALIS-LIKE SANT/MYB 2</fullName>
        <shortName>Protein RSM2</shortName>
    </alternativeName>
</protein>
<reference key="1">
    <citation type="submission" date="2004-01" db="EMBL/GenBank/DDBJ databases">
        <title>The MYB transcription factor family in Arabidopsis: a genome-wide cloning and expression pattern analysis.</title>
        <authorList>
            <person name="Qu L.-J."/>
            <person name="Gu H."/>
        </authorList>
    </citation>
    <scope>NUCLEOTIDE SEQUENCE [LARGE SCALE MRNA] (ISOFORM 2)</scope>
</reference>
<reference key="2">
    <citation type="journal article" date="1999" name="Nature">
        <title>Sequence and analysis of chromosome 4 of the plant Arabidopsis thaliana.</title>
        <authorList>
            <person name="Mayer K.F.X."/>
            <person name="Schueller C."/>
            <person name="Wambutt R."/>
            <person name="Murphy G."/>
            <person name="Volckaert G."/>
            <person name="Pohl T."/>
            <person name="Duesterhoeft A."/>
            <person name="Stiekema W."/>
            <person name="Entian K.-D."/>
            <person name="Terryn N."/>
            <person name="Harris B."/>
            <person name="Ansorge W."/>
            <person name="Brandt P."/>
            <person name="Grivell L.A."/>
            <person name="Rieger M."/>
            <person name="Weichselgartner M."/>
            <person name="de Simone V."/>
            <person name="Obermaier B."/>
            <person name="Mache R."/>
            <person name="Mueller M."/>
            <person name="Kreis M."/>
            <person name="Delseny M."/>
            <person name="Puigdomenech P."/>
            <person name="Watson M."/>
            <person name="Schmidtheini T."/>
            <person name="Reichert B."/>
            <person name="Portetelle D."/>
            <person name="Perez-Alonso M."/>
            <person name="Boutry M."/>
            <person name="Bancroft I."/>
            <person name="Vos P."/>
            <person name="Hoheisel J."/>
            <person name="Zimmermann W."/>
            <person name="Wedler H."/>
            <person name="Ridley P."/>
            <person name="Langham S.-A."/>
            <person name="McCullagh B."/>
            <person name="Bilham L."/>
            <person name="Robben J."/>
            <person name="van der Schueren J."/>
            <person name="Grymonprez B."/>
            <person name="Chuang Y.-J."/>
            <person name="Vandenbussche F."/>
            <person name="Braeken M."/>
            <person name="Weltjens I."/>
            <person name="Voet M."/>
            <person name="Bastiaens I."/>
            <person name="Aert R."/>
            <person name="Defoor E."/>
            <person name="Weitzenegger T."/>
            <person name="Bothe G."/>
            <person name="Ramsperger U."/>
            <person name="Hilbert H."/>
            <person name="Braun M."/>
            <person name="Holzer E."/>
            <person name="Brandt A."/>
            <person name="Peters S."/>
            <person name="van Staveren M."/>
            <person name="Dirkse W."/>
            <person name="Mooijman P."/>
            <person name="Klein Lankhorst R."/>
            <person name="Rose M."/>
            <person name="Hauf J."/>
            <person name="Koetter P."/>
            <person name="Berneiser S."/>
            <person name="Hempel S."/>
            <person name="Feldpausch M."/>
            <person name="Lamberth S."/>
            <person name="Van den Daele H."/>
            <person name="De Keyser A."/>
            <person name="Buysshaert C."/>
            <person name="Gielen J."/>
            <person name="Villarroel R."/>
            <person name="De Clercq R."/>
            <person name="van Montagu M."/>
            <person name="Rogers J."/>
            <person name="Cronin A."/>
            <person name="Quail M.A."/>
            <person name="Bray-Allen S."/>
            <person name="Clark L."/>
            <person name="Doggett J."/>
            <person name="Hall S."/>
            <person name="Kay M."/>
            <person name="Lennard N."/>
            <person name="McLay K."/>
            <person name="Mayes R."/>
            <person name="Pettett A."/>
            <person name="Rajandream M.A."/>
            <person name="Lyne M."/>
            <person name="Benes V."/>
            <person name="Rechmann S."/>
            <person name="Borkova D."/>
            <person name="Bloecker H."/>
            <person name="Scharfe M."/>
            <person name="Grimm M."/>
            <person name="Loehnert T.-H."/>
            <person name="Dose S."/>
            <person name="de Haan M."/>
            <person name="Maarse A.C."/>
            <person name="Schaefer M."/>
            <person name="Mueller-Auer S."/>
            <person name="Gabel C."/>
            <person name="Fuchs M."/>
            <person name="Fartmann B."/>
            <person name="Granderath K."/>
            <person name="Dauner D."/>
            <person name="Herzl A."/>
            <person name="Neumann S."/>
            <person name="Argiriou A."/>
            <person name="Vitale D."/>
            <person name="Liguori R."/>
            <person name="Piravandi E."/>
            <person name="Massenet O."/>
            <person name="Quigley F."/>
            <person name="Clabauld G."/>
            <person name="Muendlein A."/>
            <person name="Felber R."/>
            <person name="Schnabl S."/>
            <person name="Hiller R."/>
            <person name="Schmidt W."/>
            <person name="Lecharny A."/>
            <person name="Aubourg S."/>
            <person name="Chefdor F."/>
            <person name="Cooke R."/>
            <person name="Berger C."/>
            <person name="Monfort A."/>
            <person name="Casacuberta E."/>
            <person name="Gibbons T."/>
            <person name="Weber N."/>
            <person name="Vandenbol M."/>
            <person name="Bargues M."/>
            <person name="Terol J."/>
            <person name="Torres A."/>
            <person name="Perez-Perez A."/>
            <person name="Purnelle B."/>
            <person name="Bent E."/>
            <person name="Johnson S."/>
            <person name="Tacon D."/>
            <person name="Jesse T."/>
            <person name="Heijnen L."/>
            <person name="Schwarz S."/>
            <person name="Scholler P."/>
            <person name="Heber S."/>
            <person name="Francs P."/>
            <person name="Bielke C."/>
            <person name="Frishman D."/>
            <person name="Haase D."/>
            <person name="Lemcke K."/>
            <person name="Mewes H.-W."/>
            <person name="Stocker S."/>
            <person name="Zaccaria P."/>
            <person name="Bevan M."/>
            <person name="Wilson R.K."/>
            <person name="de la Bastide M."/>
            <person name="Habermann K."/>
            <person name="Parnell L."/>
            <person name="Dedhia N."/>
            <person name="Gnoj L."/>
            <person name="Schutz K."/>
            <person name="Huang E."/>
            <person name="Spiegel L."/>
            <person name="Sekhon M."/>
            <person name="Murray J."/>
            <person name="Sheet P."/>
            <person name="Cordes M."/>
            <person name="Abu-Threideh J."/>
            <person name="Stoneking T."/>
            <person name="Kalicki J."/>
            <person name="Graves T."/>
            <person name="Harmon G."/>
            <person name="Edwards J."/>
            <person name="Latreille P."/>
            <person name="Courtney L."/>
            <person name="Cloud J."/>
            <person name="Abbott A."/>
            <person name="Scott K."/>
            <person name="Johnson D."/>
            <person name="Minx P."/>
            <person name="Bentley D."/>
            <person name="Fulton B."/>
            <person name="Miller N."/>
            <person name="Greco T."/>
            <person name="Kemp K."/>
            <person name="Kramer J."/>
            <person name="Fulton L."/>
            <person name="Mardis E."/>
            <person name="Dante M."/>
            <person name="Pepin K."/>
            <person name="Hillier L.W."/>
            <person name="Nelson J."/>
            <person name="Spieth J."/>
            <person name="Ryan E."/>
            <person name="Andrews S."/>
            <person name="Geisel C."/>
            <person name="Layman D."/>
            <person name="Du H."/>
            <person name="Ali J."/>
            <person name="Berghoff A."/>
            <person name="Jones K."/>
            <person name="Drone K."/>
            <person name="Cotton M."/>
            <person name="Joshu C."/>
            <person name="Antonoiu B."/>
            <person name="Zidanic M."/>
            <person name="Strong C."/>
            <person name="Sun H."/>
            <person name="Lamar B."/>
            <person name="Yordan C."/>
            <person name="Ma P."/>
            <person name="Zhong J."/>
            <person name="Preston R."/>
            <person name="Vil D."/>
            <person name="Shekher M."/>
            <person name="Matero A."/>
            <person name="Shah R."/>
            <person name="Swaby I.K."/>
            <person name="O'Shaughnessy A."/>
            <person name="Rodriguez M."/>
            <person name="Hoffman J."/>
            <person name="Till S."/>
            <person name="Granat S."/>
            <person name="Shohdy N."/>
            <person name="Hasegawa A."/>
            <person name="Hameed A."/>
            <person name="Lodhi M."/>
            <person name="Johnson A."/>
            <person name="Chen E."/>
            <person name="Marra M.A."/>
            <person name="Martienssen R."/>
            <person name="McCombie W.R."/>
        </authorList>
    </citation>
    <scope>NUCLEOTIDE SEQUENCE [LARGE SCALE GENOMIC DNA]</scope>
    <source>
        <strain>cv. Columbia</strain>
    </source>
</reference>
<reference key="3">
    <citation type="journal article" date="2017" name="Plant J.">
        <title>Araport11: a complete reannotation of the Arabidopsis thaliana reference genome.</title>
        <authorList>
            <person name="Cheng C.Y."/>
            <person name="Krishnakumar V."/>
            <person name="Chan A.P."/>
            <person name="Thibaud-Nissen F."/>
            <person name="Schobel S."/>
            <person name="Town C.D."/>
        </authorList>
    </citation>
    <scope>GENOME REANNOTATION</scope>
    <source>
        <strain>cv. Columbia</strain>
    </source>
</reference>
<reference key="4">
    <citation type="submission" date="2006-02" db="EMBL/GenBank/DDBJ databases">
        <title>Arabidopsis ORF clones.</title>
        <authorList>
            <person name="Shinn P."/>
            <person name="Chen H."/>
            <person name="Kim C.J."/>
            <person name="Ecker J.R."/>
        </authorList>
    </citation>
    <scope>NUCLEOTIDE SEQUENCE [LARGE SCALE MRNA] (ISOFORM 2)</scope>
    <source>
        <strain>cv. Columbia</strain>
    </source>
</reference>
<reference key="5">
    <citation type="journal article" date="2007" name="Plant J.">
        <title>Diversification and co-option of RAD-like genes in the evolution of floral asymmetry.</title>
        <authorList>
            <person name="Baxter C.E.L."/>
            <person name="Costa M.M.R."/>
            <person name="Coen E.S."/>
        </authorList>
    </citation>
    <scope>NUCLEOTIDE SEQUENCE [MRNA] OF 3-100 (ISOFORM 1)</scope>
    <scope>GENE FAMILY</scope>
</reference>
<reference key="6">
    <citation type="journal article" date="2006" name="Plant Mol. Biol.">
        <title>The MYB transcription factor superfamily of Arabidopsis: expression analysis and phylogenetic comparison with the rice MYB family.</title>
        <authorList>
            <person name="Chen Y."/>
            <person name="Yang X."/>
            <person name="He K."/>
            <person name="Liu M."/>
            <person name="Li J."/>
            <person name="Gao Z."/>
            <person name="Lin Z."/>
            <person name="Zhang Y."/>
            <person name="Wang X."/>
            <person name="Qiu X."/>
            <person name="Shen Y."/>
            <person name="Zhang L."/>
            <person name="Deng X."/>
            <person name="Luo J."/>
            <person name="Deng X.-W."/>
            <person name="Chen Z."/>
            <person name="Gu H."/>
            <person name="Qu L.-J."/>
        </authorList>
    </citation>
    <scope>GENE FAMILY</scope>
</reference>
<reference key="7">
    <citation type="journal article" date="2008" name="Biosci. Biotechnol. Biochem.">
        <title>A small subfamily of Arabidopsis RADIALIS-LIKE SANT/MYB genes: a link to HOOKLESS1-mediated signal transduction during early morphogenesis.</title>
        <authorList>
            <person name="Hamaguchi A."/>
            <person name="Yamashino T."/>
            <person name="Koizumi N."/>
            <person name="Kiba T."/>
            <person name="Kojima M."/>
            <person name="Sakakibara H."/>
            <person name="Mizuno T."/>
        </authorList>
    </citation>
    <scope>GENE FAMILY</scope>
</reference>